<comment type="function">
    <text evidence="1">Formation of pseudouridine at positions 38, 39 and 40 in the anticodon stem and loop of transfer RNAs.</text>
</comment>
<comment type="catalytic activity">
    <reaction evidence="1">
        <text>uridine(38/39/40) in tRNA = pseudouridine(38/39/40) in tRNA</text>
        <dbReference type="Rhea" id="RHEA:22376"/>
        <dbReference type="Rhea" id="RHEA-COMP:10085"/>
        <dbReference type="Rhea" id="RHEA-COMP:10087"/>
        <dbReference type="ChEBI" id="CHEBI:65314"/>
        <dbReference type="ChEBI" id="CHEBI:65315"/>
        <dbReference type="EC" id="5.4.99.12"/>
    </reaction>
</comment>
<comment type="subunit">
    <text evidence="1">Homodimer.</text>
</comment>
<comment type="similarity">
    <text evidence="1">Belongs to the tRNA pseudouridine synthase TruA family.</text>
</comment>
<name>TRUA_AYWBP</name>
<accession>Q2NIY3</accession>
<sequence length="243" mass="28419">MQHFFYKLILSYDGTFYCGYQKQPQKKTVQQTFEKALKKMTHQNIPTFAASRTDKGVHSQGQTLHFQTTFSLKPKHFQKTLNYLLPPDIRVRQMHFATPNFHARYSAKSKIYQYVFSKKPLNAFNHHFQIFADKFDFVKITKALKFIEGTHNFFAFTSETQPKNFSKTIFQASLKETVHKYILVFHGNGFLKYMIRFLVGSLIEIGKNKFSLEQFQAMLLGNKTKKATLLAPAKALVLKKIFY</sequence>
<reference key="1">
    <citation type="journal article" date="2006" name="J. Bacteriol.">
        <title>Living with genome instability: the adaptation of phytoplasmas to diverse environments of their insect and plant hosts.</title>
        <authorList>
            <person name="Bai X."/>
            <person name="Zhang J."/>
            <person name="Ewing A."/>
            <person name="Miller S.A."/>
            <person name="Jancso Radek A."/>
            <person name="Shevchenko D.V."/>
            <person name="Tsukerman K."/>
            <person name="Walunas T."/>
            <person name="Lapidus A."/>
            <person name="Campbell J.W."/>
            <person name="Hogenhout S.A."/>
        </authorList>
    </citation>
    <scope>NUCLEOTIDE SEQUENCE [LARGE SCALE GENOMIC DNA]</scope>
    <source>
        <strain>AYWB</strain>
    </source>
</reference>
<feature type="chain" id="PRO_1000017038" description="tRNA pseudouridine synthase A">
    <location>
        <begin position="1"/>
        <end position="243"/>
    </location>
</feature>
<feature type="active site" description="Nucleophile" evidence="1">
    <location>
        <position position="54"/>
    </location>
</feature>
<feature type="binding site" evidence="1">
    <location>
        <position position="112"/>
    </location>
    <ligand>
        <name>substrate</name>
    </ligand>
</feature>
<gene>
    <name evidence="1" type="primary">truA</name>
    <name type="ordered locus">AYWB_493</name>
</gene>
<evidence type="ECO:0000255" key="1">
    <source>
        <dbReference type="HAMAP-Rule" id="MF_00171"/>
    </source>
</evidence>
<organism>
    <name type="scientific">Aster yellows witches'-broom phytoplasma (strain AYWB)</name>
    <dbReference type="NCBI Taxonomy" id="322098"/>
    <lineage>
        <taxon>Bacteria</taxon>
        <taxon>Bacillati</taxon>
        <taxon>Mycoplasmatota</taxon>
        <taxon>Mollicutes</taxon>
        <taxon>Acholeplasmatales</taxon>
        <taxon>Acholeplasmataceae</taxon>
        <taxon>Candidatus Phytoplasma</taxon>
        <taxon>16SrI (Aster yellows group)</taxon>
    </lineage>
</organism>
<proteinExistence type="inferred from homology"/>
<protein>
    <recommendedName>
        <fullName evidence="1">tRNA pseudouridine synthase A</fullName>
        <ecNumber evidence="1">5.4.99.12</ecNumber>
    </recommendedName>
    <alternativeName>
        <fullName evidence="1">tRNA pseudouridine(38-40) synthase</fullName>
    </alternativeName>
    <alternativeName>
        <fullName evidence="1">tRNA pseudouridylate synthase I</fullName>
    </alternativeName>
    <alternativeName>
        <fullName evidence="1">tRNA-uridine isomerase I</fullName>
    </alternativeName>
</protein>
<keyword id="KW-0413">Isomerase</keyword>
<keyword id="KW-0819">tRNA processing</keyword>
<dbReference type="EC" id="5.4.99.12" evidence="1"/>
<dbReference type="EMBL" id="CP000061">
    <property type="protein sequence ID" value="ABC65610.1"/>
    <property type="molecule type" value="Genomic_DNA"/>
</dbReference>
<dbReference type="RefSeq" id="WP_011412773.1">
    <property type="nucleotide sequence ID" value="NC_007716.1"/>
</dbReference>
<dbReference type="SMR" id="Q2NIY3"/>
<dbReference type="STRING" id="322098.AYWB_493"/>
<dbReference type="KEGG" id="ayw:AYWB_493"/>
<dbReference type="eggNOG" id="COG0101">
    <property type="taxonomic scope" value="Bacteria"/>
</dbReference>
<dbReference type="HOGENOM" id="CLU_014673_0_1_14"/>
<dbReference type="OrthoDB" id="9811823at2"/>
<dbReference type="PhylomeDB" id="Q2NIY3"/>
<dbReference type="Proteomes" id="UP000001934">
    <property type="component" value="Chromosome"/>
</dbReference>
<dbReference type="GO" id="GO:0003723">
    <property type="term" value="F:RNA binding"/>
    <property type="evidence" value="ECO:0007669"/>
    <property type="project" value="InterPro"/>
</dbReference>
<dbReference type="GO" id="GO:0160147">
    <property type="term" value="F:tRNA pseudouridine(38-40) synthase activity"/>
    <property type="evidence" value="ECO:0007669"/>
    <property type="project" value="UniProtKB-EC"/>
</dbReference>
<dbReference type="GO" id="GO:0031119">
    <property type="term" value="P:tRNA pseudouridine synthesis"/>
    <property type="evidence" value="ECO:0007669"/>
    <property type="project" value="UniProtKB-UniRule"/>
</dbReference>
<dbReference type="CDD" id="cd02570">
    <property type="entry name" value="PseudoU_synth_EcTruA"/>
    <property type="match status" value="1"/>
</dbReference>
<dbReference type="FunFam" id="3.30.70.580:FF:000001">
    <property type="entry name" value="tRNA pseudouridine synthase A"/>
    <property type="match status" value="1"/>
</dbReference>
<dbReference type="Gene3D" id="3.30.70.660">
    <property type="entry name" value="Pseudouridine synthase I, catalytic domain, C-terminal subdomain"/>
    <property type="match status" value="1"/>
</dbReference>
<dbReference type="Gene3D" id="3.30.70.580">
    <property type="entry name" value="Pseudouridine synthase I, catalytic domain, N-terminal subdomain"/>
    <property type="match status" value="1"/>
</dbReference>
<dbReference type="HAMAP" id="MF_00171">
    <property type="entry name" value="TruA"/>
    <property type="match status" value="1"/>
</dbReference>
<dbReference type="InterPro" id="IPR020103">
    <property type="entry name" value="PsdUridine_synth_cat_dom_sf"/>
</dbReference>
<dbReference type="InterPro" id="IPR001406">
    <property type="entry name" value="PsdUridine_synth_TruA"/>
</dbReference>
<dbReference type="InterPro" id="IPR020097">
    <property type="entry name" value="PsdUridine_synth_TruA_a/b_dom"/>
</dbReference>
<dbReference type="InterPro" id="IPR020095">
    <property type="entry name" value="PsdUridine_synth_TruA_C"/>
</dbReference>
<dbReference type="InterPro" id="IPR020094">
    <property type="entry name" value="TruA/RsuA/RluB/E/F_N"/>
</dbReference>
<dbReference type="NCBIfam" id="TIGR00071">
    <property type="entry name" value="hisT_truA"/>
    <property type="match status" value="1"/>
</dbReference>
<dbReference type="PANTHER" id="PTHR11142">
    <property type="entry name" value="PSEUDOURIDYLATE SYNTHASE"/>
    <property type="match status" value="1"/>
</dbReference>
<dbReference type="PANTHER" id="PTHR11142:SF0">
    <property type="entry name" value="TRNA PSEUDOURIDINE SYNTHASE-LIKE 1"/>
    <property type="match status" value="1"/>
</dbReference>
<dbReference type="Pfam" id="PF01416">
    <property type="entry name" value="PseudoU_synth_1"/>
    <property type="match status" value="2"/>
</dbReference>
<dbReference type="PIRSF" id="PIRSF001430">
    <property type="entry name" value="tRNA_psdUrid_synth"/>
    <property type="match status" value="1"/>
</dbReference>
<dbReference type="SUPFAM" id="SSF55120">
    <property type="entry name" value="Pseudouridine synthase"/>
    <property type="match status" value="1"/>
</dbReference>